<feature type="chain" id="PRO_1000058035" description="Phosphoglycerate kinase">
    <location>
        <begin position="1"/>
        <end position="387"/>
    </location>
</feature>
<feature type="binding site" evidence="1">
    <location>
        <begin position="21"/>
        <end position="23"/>
    </location>
    <ligand>
        <name>substrate</name>
    </ligand>
</feature>
<feature type="binding site" evidence="1">
    <location>
        <position position="36"/>
    </location>
    <ligand>
        <name>substrate</name>
    </ligand>
</feature>
<feature type="binding site" evidence="1">
    <location>
        <begin position="59"/>
        <end position="62"/>
    </location>
    <ligand>
        <name>substrate</name>
    </ligand>
</feature>
<feature type="binding site" evidence="1">
    <location>
        <position position="113"/>
    </location>
    <ligand>
        <name>substrate</name>
    </ligand>
</feature>
<feature type="binding site" evidence="1">
    <location>
        <position position="146"/>
    </location>
    <ligand>
        <name>substrate</name>
    </ligand>
</feature>
<feature type="binding site" evidence="1">
    <location>
        <position position="197"/>
    </location>
    <ligand>
        <name>ATP</name>
        <dbReference type="ChEBI" id="CHEBI:30616"/>
    </ligand>
</feature>
<feature type="binding site" evidence="1">
    <location>
        <position position="314"/>
    </location>
    <ligand>
        <name>ATP</name>
        <dbReference type="ChEBI" id="CHEBI:30616"/>
    </ligand>
</feature>
<feature type="binding site" evidence="1">
    <location>
        <begin position="340"/>
        <end position="343"/>
    </location>
    <ligand>
        <name>ATP</name>
        <dbReference type="ChEBI" id="CHEBI:30616"/>
    </ligand>
</feature>
<evidence type="ECO:0000255" key="1">
    <source>
        <dbReference type="HAMAP-Rule" id="MF_00145"/>
    </source>
</evidence>
<keyword id="KW-0067">ATP-binding</keyword>
<keyword id="KW-0963">Cytoplasm</keyword>
<keyword id="KW-0324">Glycolysis</keyword>
<keyword id="KW-0418">Kinase</keyword>
<keyword id="KW-0547">Nucleotide-binding</keyword>
<keyword id="KW-0808">Transferase</keyword>
<name>PGK_PSEP7</name>
<gene>
    <name evidence="1" type="primary">pgk</name>
    <name type="ordered locus">PSPA7_0655</name>
</gene>
<dbReference type="EC" id="2.7.2.3" evidence="1"/>
<dbReference type="EMBL" id="CP000744">
    <property type="protein sequence ID" value="ABR85015.1"/>
    <property type="molecule type" value="Genomic_DNA"/>
</dbReference>
<dbReference type="RefSeq" id="WP_012074107.1">
    <property type="nucleotide sequence ID" value="NC_009656.1"/>
</dbReference>
<dbReference type="SMR" id="A6UZ15"/>
<dbReference type="KEGG" id="pap:PSPA7_0655"/>
<dbReference type="HOGENOM" id="CLU_025427_0_2_6"/>
<dbReference type="UniPathway" id="UPA00109">
    <property type="reaction ID" value="UER00185"/>
</dbReference>
<dbReference type="Proteomes" id="UP000001582">
    <property type="component" value="Chromosome"/>
</dbReference>
<dbReference type="GO" id="GO:0005829">
    <property type="term" value="C:cytosol"/>
    <property type="evidence" value="ECO:0007669"/>
    <property type="project" value="TreeGrafter"/>
</dbReference>
<dbReference type="GO" id="GO:0043531">
    <property type="term" value="F:ADP binding"/>
    <property type="evidence" value="ECO:0007669"/>
    <property type="project" value="TreeGrafter"/>
</dbReference>
<dbReference type="GO" id="GO:0005524">
    <property type="term" value="F:ATP binding"/>
    <property type="evidence" value="ECO:0007669"/>
    <property type="project" value="UniProtKB-KW"/>
</dbReference>
<dbReference type="GO" id="GO:0004618">
    <property type="term" value="F:phosphoglycerate kinase activity"/>
    <property type="evidence" value="ECO:0007669"/>
    <property type="project" value="UniProtKB-UniRule"/>
</dbReference>
<dbReference type="GO" id="GO:0006094">
    <property type="term" value="P:gluconeogenesis"/>
    <property type="evidence" value="ECO:0007669"/>
    <property type="project" value="TreeGrafter"/>
</dbReference>
<dbReference type="GO" id="GO:0006096">
    <property type="term" value="P:glycolytic process"/>
    <property type="evidence" value="ECO:0007669"/>
    <property type="project" value="UniProtKB-UniRule"/>
</dbReference>
<dbReference type="FunFam" id="3.40.50.1260:FF:000001">
    <property type="entry name" value="Phosphoglycerate kinase"/>
    <property type="match status" value="1"/>
</dbReference>
<dbReference type="FunFam" id="3.40.50.1260:FF:000002">
    <property type="entry name" value="Phosphoglycerate kinase"/>
    <property type="match status" value="1"/>
</dbReference>
<dbReference type="Gene3D" id="3.40.50.1260">
    <property type="entry name" value="Phosphoglycerate kinase, N-terminal domain"/>
    <property type="match status" value="2"/>
</dbReference>
<dbReference type="HAMAP" id="MF_00145">
    <property type="entry name" value="Phosphoglyc_kinase"/>
    <property type="match status" value="1"/>
</dbReference>
<dbReference type="InterPro" id="IPR001576">
    <property type="entry name" value="Phosphoglycerate_kinase"/>
</dbReference>
<dbReference type="InterPro" id="IPR015911">
    <property type="entry name" value="Phosphoglycerate_kinase_CS"/>
</dbReference>
<dbReference type="InterPro" id="IPR015824">
    <property type="entry name" value="Phosphoglycerate_kinase_N"/>
</dbReference>
<dbReference type="InterPro" id="IPR036043">
    <property type="entry name" value="Phosphoglycerate_kinase_sf"/>
</dbReference>
<dbReference type="PANTHER" id="PTHR11406">
    <property type="entry name" value="PHOSPHOGLYCERATE KINASE"/>
    <property type="match status" value="1"/>
</dbReference>
<dbReference type="PANTHER" id="PTHR11406:SF23">
    <property type="entry name" value="PHOSPHOGLYCERATE KINASE 1, CHLOROPLASTIC-RELATED"/>
    <property type="match status" value="1"/>
</dbReference>
<dbReference type="Pfam" id="PF00162">
    <property type="entry name" value="PGK"/>
    <property type="match status" value="1"/>
</dbReference>
<dbReference type="PIRSF" id="PIRSF000724">
    <property type="entry name" value="Pgk"/>
    <property type="match status" value="1"/>
</dbReference>
<dbReference type="PRINTS" id="PR00477">
    <property type="entry name" value="PHGLYCKINASE"/>
</dbReference>
<dbReference type="SUPFAM" id="SSF53748">
    <property type="entry name" value="Phosphoglycerate kinase"/>
    <property type="match status" value="1"/>
</dbReference>
<dbReference type="PROSITE" id="PS00111">
    <property type="entry name" value="PGLYCERATE_KINASE"/>
    <property type="match status" value="1"/>
</dbReference>
<proteinExistence type="inferred from homology"/>
<sequence length="387" mass="40405">MTVLKMTDLDLKGKRVLIREDLNVPVKDGQVQSDARIKAALPTIRLALEKGAAVMVCSHLGRPSEGEFSAENSLKPVAEYLSKALGREVPLLADYLDGVEVKAGDLVLFENVRFNKGEKKNADELAQKYAALCDVFVMDAFGTAHRAEGSTHGVARFAKVAAAGPLLAAELDALGKALGNPARPMAAIVAGSKVSTKLDVLNSLAGICDQLIVGGGIANTFLAAAGHKVGKSLYEADLVETAKAIAAKVKVPLPVDVVVAKEFAESAVATVKAIAEVADDDMILDIGPQTAAQFADLLKTSKTILWNGPVGVFEFDQFGEGTRTLANAIADSAAFSIAGGGDTLAAIDKYGIAERISYISTGGGAFLEFVEGKVLPAVEILEQRAKG</sequence>
<accession>A6UZ15</accession>
<protein>
    <recommendedName>
        <fullName evidence="1">Phosphoglycerate kinase</fullName>
        <ecNumber evidence="1">2.7.2.3</ecNumber>
    </recommendedName>
</protein>
<organism>
    <name type="scientific">Pseudomonas paraeruginosa (strain DSM 24068 / PA7)</name>
    <name type="common">Pseudomonas aeruginosa (strain PA7)</name>
    <dbReference type="NCBI Taxonomy" id="381754"/>
    <lineage>
        <taxon>Bacteria</taxon>
        <taxon>Pseudomonadati</taxon>
        <taxon>Pseudomonadota</taxon>
        <taxon>Gammaproteobacteria</taxon>
        <taxon>Pseudomonadales</taxon>
        <taxon>Pseudomonadaceae</taxon>
        <taxon>Pseudomonas</taxon>
        <taxon>Pseudomonas paraeruginosa</taxon>
    </lineage>
</organism>
<reference key="1">
    <citation type="submission" date="2007-06" db="EMBL/GenBank/DDBJ databases">
        <authorList>
            <person name="Dodson R.J."/>
            <person name="Harkins D."/>
            <person name="Paulsen I.T."/>
        </authorList>
    </citation>
    <scope>NUCLEOTIDE SEQUENCE [LARGE SCALE GENOMIC DNA]</scope>
    <source>
        <strain>DSM 24068 / PA7</strain>
    </source>
</reference>
<comment type="catalytic activity">
    <reaction evidence="1">
        <text>(2R)-3-phosphoglycerate + ATP = (2R)-3-phospho-glyceroyl phosphate + ADP</text>
        <dbReference type="Rhea" id="RHEA:14801"/>
        <dbReference type="ChEBI" id="CHEBI:30616"/>
        <dbReference type="ChEBI" id="CHEBI:57604"/>
        <dbReference type="ChEBI" id="CHEBI:58272"/>
        <dbReference type="ChEBI" id="CHEBI:456216"/>
        <dbReference type="EC" id="2.7.2.3"/>
    </reaction>
</comment>
<comment type="pathway">
    <text evidence="1">Carbohydrate degradation; glycolysis; pyruvate from D-glyceraldehyde 3-phosphate: step 2/5.</text>
</comment>
<comment type="subunit">
    <text evidence="1">Monomer.</text>
</comment>
<comment type="subcellular location">
    <subcellularLocation>
        <location evidence="1">Cytoplasm</location>
    </subcellularLocation>
</comment>
<comment type="similarity">
    <text evidence="1">Belongs to the phosphoglycerate kinase family.</text>
</comment>